<protein>
    <recommendedName>
        <fullName>Cytochrome c oxidase copper chaperone</fullName>
    </recommendedName>
</protein>
<dbReference type="EMBL" id="L75948">
    <property type="protein sequence ID" value="AAA85477.1"/>
    <property type="molecule type" value="Genomic_DNA"/>
</dbReference>
<dbReference type="EMBL" id="Z73114">
    <property type="protein sequence ID" value="CAA97453.1"/>
    <property type="molecule type" value="Genomic_DNA"/>
</dbReference>
<dbReference type="EMBL" id="BK006945">
    <property type="protein sequence ID" value="DAA09309.1"/>
    <property type="molecule type" value="Genomic_DNA"/>
</dbReference>
<dbReference type="PIR" id="S62056">
    <property type="entry name" value="S62056"/>
</dbReference>
<dbReference type="RefSeq" id="NP_013092.1">
    <property type="nucleotide sequence ID" value="NM_001181829.1"/>
</dbReference>
<dbReference type="PDB" id="1U96">
    <property type="method" value="NMR"/>
    <property type="chains" value="A=1-69"/>
</dbReference>
<dbReference type="PDB" id="1U97">
    <property type="method" value="NMR"/>
    <property type="chains" value="A=1-69"/>
</dbReference>
<dbReference type="PDB" id="1Z2G">
    <property type="method" value="NMR"/>
    <property type="chains" value="A=1-69"/>
</dbReference>
<dbReference type="PDBsum" id="1U96"/>
<dbReference type="PDBsum" id="1U97"/>
<dbReference type="PDBsum" id="1Z2G"/>
<dbReference type="SMR" id="Q12287"/>
<dbReference type="BioGRID" id="31242">
    <property type="interactions" value="216"/>
</dbReference>
<dbReference type="DIP" id="DIP-2915N"/>
<dbReference type="FunCoup" id="Q12287">
    <property type="interactions" value="460"/>
</dbReference>
<dbReference type="IntAct" id="Q12287">
    <property type="interactions" value="7"/>
</dbReference>
<dbReference type="MINT" id="Q12287"/>
<dbReference type="STRING" id="4932.YLL009C"/>
<dbReference type="PaxDb" id="4932-YLL009C"/>
<dbReference type="PeptideAtlas" id="Q12287"/>
<dbReference type="EnsemblFungi" id="YLL009C_mRNA">
    <property type="protein sequence ID" value="YLL009C"/>
    <property type="gene ID" value="YLL009C"/>
</dbReference>
<dbReference type="GeneID" id="850651"/>
<dbReference type="KEGG" id="sce:YLL009C"/>
<dbReference type="AGR" id="SGD:S000003932"/>
<dbReference type="SGD" id="S000003932">
    <property type="gene designation" value="COX17"/>
</dbReference>
<dbReference type="VEuPathDB" id="FungiDB:YLL009C"/>
<dbReference type="eggNOG" id="KOG3496">
    <property type="taxonomic scope" value="Eukaryota"/>
</dbReference>
<dbReference type="HOGENOM" id="CLU_149618_3_1_1"/>
<dbReference type="InParanoid" id="Q12287"/>
<dbReference type="OMA" id="CCVCKPE"/>
<dbReference type="OrthoDB" id="1915887at2759"/>
<dbReference type="BioCyc" id="YEAST:G3O-32114-MONOMER"/>
<dbReference type="BioGRID-ORCS" id="850651">
    <property type="hits" value="0 hits in 10 CRISPR screens"/>
</dbReference>
<dbReference type="EvolutionaryTrace" id="Q12287"/>
<dbReference type="PRO" id="PR:Q12287"/>
<dbReference type="Proteomes" id="UP000002311">
    <property type="component" value="Chromosome XII"/>
</dbReference>
<dbReference type="RNAct" id="Q12287">
    <property type="molecule type" value="protein"/>
</dbReference>
<dbReference type="GO" id="GO:0005829">
    <property type="term" value="C:cytosol"/>
    <property type="evidence" value="ECO:0000314"/>
    <property type="project" value="SGD"/>
</dbReference>
<dbReference type="GO" id="GO:0005758">
    <property type="term" value="C:mitochondrial intermembrane space"/>
    <property type="evidence" value="ECO:0000314"/>
    <property type="project" value="SGD"/>
</dbReference>
<dbReference type="GO" id="GO:0005739">
    <property type="term" value="C:mitochondrion"/>
    <property type="evidence" value="ECO:0000314"/>
    <property type="project" value="MGI"/>
</dbReference>
<dbReference type="GO" id="GO:0016531">
    <property type="term" value="F:copper chaperone activity"/>
    <property type="evidence" value="ECO:0000314"/>
    <property type="project" value="SGD"/>
</dbReference>
<dbReference type="GO" id="GO:1903136">
    <property type="term" value="F:cuprous ion binding"/>
    <property type="evidence" value="ECO:0000314"/>
    <property type="project" value="CAFA"/>
</dbReference>
<dbReference type="GO" id="GO:0006825">
    <property type="term" value="P:copper ion transport"/>
    <property type="evidence" value="ECO:0000314"/>
    <property type="project" value="SGD"/>
</dbReference>
<dbReference type="GO" id="GO:0033617">
    <property type="term" value="P:mitochondrial cytochrome c oxidase assembly"/>
    <property type="evidence" value="ECO:0000314"/>
    <property type="project" value="SGD"/>
</dbReference>
<dbReference type="GO" id="GO:0018343">
    <property type="term" value="P:protein farnesylation"/>
    <property type="evidence" value="ECO:0000314"/>
    <property type="project" value="MGI"/>
</dbReference>
<dbReference type="DisProt" id="DP00277"/>
<dbReference type="FunFam" id="1.10.287.1130:FF:000004">
    <property type="entry name" value="Cytochrome c oxidase copper chaperone"/>
    <property type="match status" value="1"/>
</dbReference>
<dbReference type="Gene3D" id="1.10.287.1130">
    <property type="entry name" value="CytochromE C oxidase copper chaperone"/>
    <property type="match status" value="1"/>
</dbReference>
<dbReference type="InterPro" id="IPR009069">
    <property type="entry name" value="Cys_alpha_HP_mot_SF"/>
</dbReference>
<dbReference type="InterPro" id="IPR007745">
    <property type="entry name" value="Cyt_c_oxidase_Cu-chaperone"/>
</dbReference>
<dbReference type="PANTHER" id="PTHR16719">
    <property type="entry name" value="CYTOCHROME C OXIDASE COPPER CHAPERONE"/>
    <property type="match status" value="1"/>
</dbReference>
<dbReference type="PANTHER" id="PTHR16719:SF0">
    <property type="entry name" value="CYTOCHROME C OXIDASE COPPER CHAPERONE"/>
    <property type="match status" value="1"/>
</dbReference>
<dbReference type="Pfam" id="PF05051">
    <property type="entry name" value="COX17"/>
    <property type="match status" value="1"/>
</dbReference>
<dbReference type="SUPFAM" id="SSF47072">
    <property type="entry name" value="Cysteine alpha-hairpin motif"/>
    <property type="match status" value="1"/>
</dbReference>
<dbReference type="PROSITE" id="PS51808">
    <property type="entry name" value="CHCH"/>
    <property type="match status" value="1"/>
</dbReference>
<name>COX17_YEAST</name>
<gene>
    <name type="primary">COX17</name>
    <name type="ordered locus">YLL009C</name>
    <name type="ORF">L1343</name>
</gene>
<feature type="initiator methionine" description="Removed" evidence="4">
    <location>
        <position position="1"/>
    </location>
</feature>
<feature type="chain" id="PRO_0000213541" description="Cytochrome c oxidase copper chaperone">
    <location>
        <begin position="2"/>
        <end position="69"/>
    </location>
</feature>
<feature type="domain" description="CHCH" evidence="2">
    <location>
        <begin position="23"/>
        <end position="65"/>
    </location>
</feature>
<feature type="short sequence motif" description="Cx9C motif 1" evidence="2">
    <location>
        <begin position="26"/>
        <end position="36"/>
    </location>
</feature>
<feature type="short sequence motif" description="Cx9C motif 2" evidence="2">
    <location>
        <begin position="47"/>
        <end position="57"/>
    </location>
</feature>
<feature type="binding site" evidence="1">
    <location>
        <position position="23"/>
    </location>
    <ligand>
        <name>Cu cation</name>
        <dbReference type="ChEBI" id="CHEBI:23378"/>
    </ligand>
</feature>
<feature type="binding site" evidence="1">
    <location>
        <position position="24"/>
    </location>
    <ligand>
        <name>Cu cation</name>
        <dbReference type="ChEBI" id="CHEBI:23378"/>
    </ligand>
</feature>
<feature type="disulfide bond" evidence="2">
    <location>
        <begin position="26"/>
        <end position="57"/>
    </location>
</feature>
<feature type="disulfide bond" evidence="2">
    <location>
        <begin position="36"/>
        <end position="47"/>
    </location>
</feature>
<feature type="strand" evidence="7">
    <location>
        <begin position="3"/>
        <end position="7"/>
    </location>
</feature>
<feature type="strand" evidence="6">
    <location>
        <begin position="13"/>
        <end position="15"/>
    </location>
</feature>
<feature type="strand" evidence="8">
    <location>
        <begin position="23"/>
        <end position="25"/>
    </location>
</feature>
<feature type="helix" evidence="6">
    <location>
        <begin position="28"/>
        <end position="39"/>
    </location>
</feature>
<feature type="helix" evidence="6">
    <location>
        <begin position="45"/>
        <end position="47"/>
    </location>
</feature>
<feature type="helix" evidence="6">
    <location>
        <begin position="48"/>
        <end position="59"/>
    </location>
</feature>
<feature type="turn" evidence="6">
    <location>
        <begin position="60"/>
        <end position="62"/>
    </location>
</feature>
<reference key="1">
    <citation type="journal article" date="1996" name="J. Biol. Chem.">
        <title>Characterization of COX17, a yeast gene involved in copper metabolism and assembly of cytochrome oxidase.</title>
        <authorList>
            <person name="Glerum D.M."/>
            <person name="Shtanko A."/>
            <person name="Tzagoloff A."/>
        </authorList>
    </citation>
    <scope>NUCLEOTIDE SEQUENCE [GENOMIC DNA]</scope>
    <source>
        <strain>ATCC 24657 / D273-10B</strain>
    </source>
</reference>
<reference key="2">
    <citation type="journal article" date="1997" name="Nature">
        <title>The nucleotide sequence of Saccharomyces cerevisiae chromosome XII.</title>
        <authorList>
            <person name="Johnston M."/>
            <person name="Hillier L.W."/>
            <person name="Riles L."/>
            <person name="Albermann K."/>
            <person name="Andre B."/>
            <person name="Ansorge W."/>
            <person name="Benes V."/>
            <person name="Brueckner M."/>
            <person name="Delius H."/>
            <person name="Dubois E."/>
            <person name="Duesterhoeft A."/>
            <person name="Entian K.-D."/>
            <person name="Floeth M."/>
            <person name="Goffeau A."/>
            <person name="Hebling U."/>
            <person name="Heumann K."/>
            <person name="Heuss-Neitzel D."/>
            <person name="Hilbert H."/>
            <person name="Hilger F."/>
            <person name="Kleine K."/>
            <person name="Koetter P."/>
            <person name="Louis E.J."/>
            <person name="Messenguy F."/>
            <person name="Mewes H.-W."/>
            <person name="Miosga T."/>
            <person name="Moestl D."/>
            <person name="Mueller-Auer S."/>
            <person name="Nentwich U."/>
            <person name="Obermaier B."/>
            <person name="Piravandi E."/>
            <person name="Pohl T.M."/>
            <person name="Portetelle D."/>
            <person name="Purnelle B."/>
            <person name="Rechmann S."/>
            <person name="Rieger M."/>
            <person name="Rinke M."/>
            <person name="Rose M."/>
            <person name="Scharfe M."/>
            <person name="Scherens B."/>
            <person name="Scholler P."/>
            <person name="Schwager C."/>
            <person name="Schwarz S."/>
            <person name="Underwood A.P."/>
            <person name="Urrestarazu L.A."/>
            <person name="Vandenbol M."/>
            <person name="Verhasselt P."/>
            <person name="Vierendeels F."/>
            <person name="Voet M."/>
            <person name="Volckaert G."/>
            <person name="Voss H."/>
            <person name="Wambutt R."/>
            <person name="Wedler E."/>
            <person name="Wedler H."/>
            <person name="Zimmermann F.K."/>
            <person name="Zollner A."/>
            <person name="Hani J."/>
            <person name="Hoheisel J.D."/>
        </authorList>
    </citation>
    <scope>NUCLEOTIDE SEQUENCE [LARGE SCALE GENOMIC DNA]</scope>
    <source>
        <strain>ATCC 204508 / S288c</strain>
    </source>
</reference>
<reference key="3">
    <citation type="journal article" date="2014" name="G3 (Bethesda)">
        <title>The reference genome sequence of Saccharomyces cerevisiae: Then and now.</title>
        <authorList>
            <person name="Engel S.R."/>
            <person name="Dietrich F.S."/>
            <person name="Fisk D.G."/>
            <person name="Binkley G."/>
            <person name="Balakrishnan R."/>
            <person name="Costanzo M.C."/>
            <person name="Dwight S.S."/>
            <person name="Hitz B.C."/>
            <person name="Karra K."/>
            <person name="Nash R.S."/>
            <person name="Weng S."/>
            <person name="Wong E.D."/>
            <person name="Lloyd P."/>
            <person name="Skrzypek M.S."/>
            <person name="Miyasato S.R."/>
            <person name="Simison M."/>
            <person name="Cherry J.M."/>
        </authorList>
    </citation>
    <scope>GENOME REANNOTATION</scope>
    <source>
        <strain>ATCC 204508 / S288c</strain>
    </source>
</reference>
<reference key="4">
    <citation type="journal article" date="1997" name="J. Biol. Chem.">
        <title>Purification, characterization, and localization of yeast Cox17p, a mitochondrial copper shuttle.</title>
        <authorList>
            <person name="Beers J."/>
            <person name="Glerum D.M."/>
            <person name="Tzagoloff A."/>
        </authorList>
    </citation>
    <scope>PROTEIN SEQUENCE OF 2-6</scope>
    <scope>CHARACTERIZATION</scope>
    <scope>SUBCELLULAR LOCATION</scope>
</reference>
<reference key="5">
    <citation type="journal article" date="1998" name="Biochemistry">
        <title>Characterization of the copper chaperone Cox17 of Saccharomyces cerevisiae.</title>
        <authorList>
            <person name="Srinivasan C."/>
            <person name="Posewitz M.C."/>
            <person name="George G.N."/>
            <person name="Winge D.R."/>
        </authorList>
    </citation>
    <scope>CHARACTERIZATION</scope>
</reference>
<reference key="6">
    <citation type="journal article" date="2012" name="Mol. Cell. Proteomics">
        <title>Intermembrane space proteome of yeast mitochondria.</title>
        <authorList>
            <person name="Voegtle F.N."/>
            <person name="Burkhart J.M."/>
            <person name="Rao S."/>
            <person name="Gerbeth C."/>
            <person name="Hinrichs J."/>
            <person name="Martinou J.C."/>
            <person name="Chacinska A."/>
            <person name="Sickmann A."/>
            <person name="Zahedi R.P."/>
            <person name="Meisinger C."/>
        </authorList>
    </citation>
    <scope>IDENTIFICATION BY MASS SPECTROMETRY</scope>
    <scope>SUBCELLULAR LOCATION [LARGE SCALE ANALYSIS]</scope>
</reference>
<reference key="7">
    <citation type="journal article" date="2004" name="J. Biol. Chem.">
        <title>Yeast cox17 solution structure and copper(I) binding.</title>
        <authorList>
            <person name="Abajian C."/>
            <person name="Yatsunyk L.A."/>
            <person name="Ramirez B.E."/>
            <person name="Rosenzweig A.C."/>
        </authorList>
    </citation>
    <scope>STRUCTURE BY NMR</scope>
</reference>
<evidence type="ECO:0000250" key="1">
    <source>
        <dbReference type="UniProtKB" id="Q14061"/>
    </source>
</evidence>
<evidence type="ECO:0000255" key="2">
    <source>
        <dbReference type="PROSITE-ProRule" id="PRU01150"/>
    </source>
</evidence>
<evidence type="ECO:0000269" key="3">
    <source>
    </source>
</evidence>
<evidence type="ECO:0000269" key="4">
    <source>
    </source>
</evidence>
<evidence type="ECO:0000305" key="5"/>
<evidence type="ECO:0007829" key="6">
    <source>
        <dbReference type="PDB" id="1U96"/>
    </source>
</evidence>
<evidence type="ECO:0007829" key="7">
    <source>
        <dbReference type="PDB" id="1U97"/>
    </source>
</evidence>
<evidence type="ECO:0007829" key="8">
    <source>
        <dbReference type="PDB" id="1Z2G"/>
    </source>
</evidence>
<sequence length="69" mass="8056">MTETDKKQEQENHAECEDKPKPCCVCKPEKEERDTCILFNGQDSEKCKEFIEKYKECMKGYGFEVPSAN</sequence>
<accession>Q12287</accession>
<accession>D6VXZ3</accession>
<organism>
    <name type="scientific">Saccharomyces cerevisiae (strain ATCC 204508 / S288c)</name>
    <name type="common">Baker's yeast</name>
    <dbReference type="NCBI Taxonomy" id="559292"/>
    <lineage>
        <taxon>Eukaryota</taxon>
        <taxon>Fungi</taxon>
        <taxon>Dikarya</taxon>
        <taxon>Ascomycota</taxon>
        <taxon>Saccharomycotina</taxon>
        <taxon>Saccharomycetes</taxon>
        <taxon>Saccharomycetales</taxon>
        <taxon>Saccharomycetaceae</taxon>
        <taxon>Saccharomyces</taxon>
    </lineage>
</organism>
<comment type="function">
    <text>Copper chaperone for cytochrome c oxidase (COX). Binds two copper ions and deliver them to the Cu(A) site of COX.</text>
</comment>
<comment type="subcellular location">
    <subcellularLocation>
        <location evidence="3 4">Mitochondrion intermembrane space</location>
    </subcellularLocation>
</comment>
<comment type="similarity">
    <text evidence="5">Belongs to the COX17 family.</text>
</comment>
<keyword id="KW-0002">3D-structure</keyword>
<keyword id="KW-0143">Chaperone</keyword>
<keyword id="KW-0186">Copper</keyword>
<keyword id="KW-0903">Direct protein sequencing</keyword>
<keyword id="KW-1015">Disulfide bond</keyword>
<keyword id="KW-0479">Metal-binding</keyword>
<keyword id="KW-0496">Mitochondrion</keyword>
<keyword id="KW-1185">Reference proteome</keyword>
<proteinExistence type="evidence at protein level"/>